<proteinExistence type="inferred from homology"/>
<accession>C3MTL3</accession>
<keyword id="KW-0456">Lyase</keyword>
<evidence type="ECO:0000255" key="1">
    <source>
        <dbReference type="HAMAP-Rule" id="MF_00434"/>
    </source>
</evidence>
<reference key="1">
    <citation type="journal article" date="2009" name="Proc. Natl. Acad. Sci. U.S.A.">
        <title>Biogeography of the Sulfolobus islandicus pan-genome.</title>
        <authorList>
            <person name="Reno M.L."/>
            <person name="Held N.L."/>
            <person name="Fields C.J."/>
            <person name="Burke P.V."/>
            <person name="Whitaker R.J."/>
        </authorList>
    </citation>
    <scope>NUCLEOTIDE SEQUENCE [LARGE SCALE GENOMIC DNA]</scope>
    <source>
        <strain>M.14.25 / Kamchatka #1</strain>
    </source>
</reference>
<organism>
    <name type="scientific">Saccharolobus islandicus (strain M.14.25 / Kamchatka #1)</name>
    <name type="common">Sulfolobus islandicus</name>
    <dbReference type="NCBI Taxonomy" id="427317"/>
    <lineage>
        <taxon>Archaea</taxon>
        <taxon>Thermoproteota</taxon>
        <taxon>Thermoprotei</taxon>
        <taxon>Sulfolobales</taxon>
        <taxon>Sulfolobaceae</taxon>
        <taxon>Saccharolobus</taxon>
    </lineage>
</organism>
<protein>
    <recommendedName>
        <fullName evidence="1">Putative pterin-4-alpha-carbinolamine dehydratase</fullName>
        <shortName evidence="1">PHS</shortName>
        <ecNumber evidence="1">4.2.1.96</ecNumber>
    </recommendedName>
    <alternativeName>
        <fullName evidence="1">4-alpha-hydroxy-tetrahydropterin dehydratase</fullName>
    </alternativeName>
    <alternativeName>
        <fullName evidence="1">Pterin carbinolamine dehydratase</fullName>
        <shortName evidence="1">PCD</shortName>
    </alternativeName>
</protein>
<comment type="catalytic activity">
    <reaction evidence="1">
        <text>(4aS,6R)-4a-hydroxy-L-erythro-5,6,7,8-tetrahydrobiopterin = (6R)-L-erythro-6,7-dihydrobiopterin + H2O</text>
        <dbReference type="Rhea" id="RHEA:11920"/>
        <dbReference type="ChEBI" id="CHEBI:15377"/>
        <dbReference type="ChEBI" id="CHEBI:15642"/>
        <dbReference type="ChEBI" id="CHEBI:43120"/>
        <dbReference type="EC" id="4.2.1.96"/>
    </reaction>
</comment>
<comment type="similarity">
    <text evidence="1">Belongs to the pterin-4-alpha-carbinolamine dehydratase family.</text>
</comment>
<dbReference type="EC" id="4.2.1.96" evidence="1"/>
<dbReference type="EMBL" id="CP001400">
    <property type="protein sequence ID" value="ACP36897.1"/>
    <property type="molecule type" value="Genomic_DNA"/>
</dbReference>
<dbReference type="RefSeq" id="WP_012710184.1">
    <property type="nucleotide sequence ID" value="NC_012588.1"/>
</dbReference>
<dbReference type="SMR" id="C3MTL3"/>
<dbReference type="KEGG" id="sia:M1425_0005"/>
<dbReference type="HOGENOM" id="CLU_081974_4_5_2"/>
<dbReference type="Proteomes" id="UP000001350">
    <property type="component" value="Chromosome"/>
</dbReference>
<dbReference type="GO" id="GO:0008124">
    <property type="term" value="F:4-alpha-hydroxytetrahydrobiopterin dehydratase activity"/>
    <property type="evidence" value="ECO:0007669"/>
    <property type="project" value="UniProtKB-UniRule"/>
</dbReference>
<dbReference type="GO" id="GO:0006729">
    <property type="term" value="P:tetrahydrobiopterin biosynthetic process"/>
    <property type="evidence" value="ECO:0007669"/>
    <property type="project" value="InterPro"/>
</dbReference>
<dbReference type="CDD" id="cd00488">
    <property type="entry name" value="PCD_DCoH"/>
    <property type="match status" value="1"/>
</dbReference>
<dbReference type="Gene3D" id="3.30.1360.20">
    <property type="entry name" value="Transcriptional coactivator/pterin dehydratase"/>
    <property type="match status" value="1"/>
</dbReference>
<dbReference type="HAMAP" id="MF_00434">
    <property type="entry name" value="Pterin_4_alpha"/>
    <property type="match status" value="1"/>
</dbReference>
<dbReference type="InterPro" id="IPR036428">
    <property type="entry name" value="PCD_sf"/>
</dbReference>
<dbReference type="InterPro" id="IPR001533">
    <property type="entry name" value="Pterin_deHydtase"/>
</dbReference>
<dbReference type="NCBIfam" id="NF002017">
    <property type="entry name" value="PRK00823.1-2"/>
    <property type="match status" value="1"/>
</dbReference>
<dbReference type="PANTHER" id="PTHR12599">
    <property type="entry name" value="PTERIN-4-ALPHA-CARBINOLAMINE DEHYDRATASE"/>
    <property type="match status" value="1"/>
</dbReference>
<dbReference type="PANTHER" id="PTHR12599:SF0">
    <property type="entry name" value="PTERIN-4-ALPHA-CARBINOLAMINE DEHYDRATASE"/>
    <property type="match status" value="1"/>
</dbReference>
<dbReference type="Pfam" id="PF01329">
    <property type="entry name" value="Pterin_4a"/>
    <property type="match status" value="1"/>
</dbReference>
<dbReference type="SUPFAM" id="SSF55248">
    <property type="entry name" value="PCD-like"/>
    <property type="match status" value="1"/>
</dbReference>
<name>PHS_SACI4</name>
<sequence>MSGISSKGLEELKNNGWLILEDGKKIKKEFKFKDFKQSIDFLKDIQPSADALDHHPDVCIYYNRVIVELTTHDMGGLTDLDYKLAIKIDELYKMKTSNL</sequence>
<gene>
    <name type="ordered locus">M1425_0005</name>
</gene>
<feature type="chain" id="PRO_1000206073" description="Putative pterin-4-alpha-carbinolamine dehydratase">
    <location>
        <begin position="1"/>
        <end position="99"/>
    </location>
</feature>